<evidence type="ECO:0000250" key="1"/>
<evidence type="ECO:0000269" key="2">
    <source>
    </source>
</evidence>
<evidence type="ECO:0000305" key="3"/>
<reference key="1">
    <citation type="journal article" date="1999" name="Appl. Environ. Microbiol.">
        <title>D-pantothenate synthesis in Corynebacterium glutamicum and use of panBC and genes encoding L-valine synthesis for D-pantothenate overproduction.</title>
        <authorList>
            <person name="Eggeling L."/>
            <person name="Sahm H."/>
        </authorList>
    </citation>
    <scope>NUCLEOTIDE SEQUENCE [GENOMIC DNA]</scope>
    <scope>FUNCTION</scope>
    <scope>CATALYTIC ACTIVITY</scope>
    <source>
        <strain>ATCC 13032 / DSM 20300 / JCM 1318 / BCRC 11384 / CCUG 27702 / LMG 3730 / NBRC 12168 / NCIMB 10025 / NRRL B-2784 / 534</strain>
    </source>
</reference>
<reference key="2">
    <citation type="journal article" date="2003" name="Appl. Microbiol. Biotechnol.">
        <title>The Corynebacterium glutamicum genome: features and impacts on biotechnological processes.</title>
        <authorList>
            <person name="Ikeda M."/>
            <person name="Nakagawa S."/>
        </authorList>
    </citation>
    <scope>NUCLEOTIDE SEQUENCE [LARGE SCALE GENOMIC DNA]</scope>
    <source>
        <strain>ATCC 13032 / DSM 20300 / JCM 1318 / BCRC 11384 / CCUG 27702 / LMG 3730 / NBRC 12168 / NCIMB 10025 / NRRL B-2784 / 534</strain>
    </source>
</reference>
<reference key="3">
    <citation type="journal article" date="2003" name="J. Biotechnol.">
        <title>The complete Corynebacterium glutamicum ATCC 13032 genome sequence and its impact on the production of L-aspartate-derived amino acids and vitamins.</title>
        <authorList>
            <person name="Kalinowski J."/>
            <person name="Bathe B."/>
            <person name="Bartels D."/>
            <person name="Bischoff N."/>
            <person name="Bott M."/>
            <person name="Burkovski A."/>
            <person name="Dusch N."/>
            <person name="Eggeling L."/>
            <person name="Eikmanns B.J."/>
            <person name="Gaigalat L."/>
            <person name="Goesmann A."/>
            <person name="Hartmann M."/>
            <person name="Huthmacher K."/>
            <person name="Kraemer R."/>
            <person name="Linke B."/>
            <person name="McHardy A.C."/>
            <person name="Meyer F."/>
            <person name="Moeckel B."/>
            <person name="Pfefferle W."/>
            <person name="Puehler A."/>
            <person name="Rey D.A."/>
            <person name="Rueckert C."/>
            <person name="Rupp O."/>
            <person name="Sahm H."/>
            <person name="Wendisch V.F."/>
            <person name="Wiegraebe I."/>
            <person name="Tauch A."/>
        </authorList>
    </citation>
    <scope>NUCLEOTIDE SEQUENCE [LARGE SCALE GENOMIC DNA]</scope>
    <source>
        <strain>ATCC 13032 / DSM 20300 / JCM 1318 / BCRC 11384 / CCUG 27702 / LMG 3730 / NBRC 12168 / NCIMB 10025 / NRRL B-2784 / 534</strain>
    </source>
</reference>
<gene>
    <name type="primary">panB</name>
    <name type="ordered locus">Cgl0114</name>
    <name type="ordered locus">cg0149</name>
</gene>
<sequence length="269" mass="28324">MSGIDAKKIRTRHFREAKVNGQKVSVLTSYDALSARIFDEAGVDMLLVGDSAANVVLGRDTTLSITLDEMIVLAKAVTIATKRALVVVDLPFGTYEVSPNQAVESAIRVMRETGAAAVKIEGGVEIAQTIRRIVDAGIPVVGHIGYTPQSEHSLGGHVVQGRGASSGKLIADARALEQAGAFAVVLEMVPAEAAREVTEDLSITTIGIGAGNGTDGQVLVWQDAFGLNRGKKPRFVREYATLGDSLHDAAQAYIADIHAGTFPGEAESF</sequence>
<name>PANB_CORGL</name>
<dbReference type="EC" id="2.1.2.11"/>
<dbReference type="EMBL" id="X96580">
    <property type="protein sequence ID" value="CAA65397.1"/>
    <property type="status" value="ALT_INIT"/>
    <property type="molecule type" value="Genomic_DNA"/>
</dbReference>
<dbReference type="EMBL" id="BA000036">
    <property type="protein sequence ID" value="BAB97507.1"/>
    <property type="status" value="ALT_INIT"/>
    <property type="molecule type" value="Genomic_DNA"/>
</dbReference>
<dbReference type="EMBL" id="BX927148">
    <property type="protein sequence ID" value="CAF18682.1"/>
    <property type="status" value="ALT_INIT"/>
    <property type="molecule type" value="Genomic_DNA"/>
</dbReference>
<dbReference type="PIR" id="T47119">
    <property type="entry name" value="T47119"/>
</dbReference>
<dbReference type="RefSeq" id="NP_599367.1">
    <property type="nucleotide sequence ID" value="NC_003450.3"/>
</dbReference>
<dbReference type="RefSeq" id="WP_011013400.1">
    <property type="nucleotide sequence ID" value="NC_006958.1"/>
</dbReference>
<dbReference type="SMR" id="Q9X712"/>
<dbReference type="STRING" id="196627.cg0149"/>
<dbReference type="GeneID" id="1021087"/>
<dbReference type="KEGG" id="cgb:cg0149"/>
<dbReference type="KEGG" id="cgl:Cgl0114"/>
<dbReference type="PATRIC" id="fig|196627.13.peg.117"/>
<dbReference type="eggNOG" id="COG0413">
    <property type="taxonomic scope" value="Bacteria"/>
</dbReference>
<dbReference type="HOGENOM" id="CLU_036645_1_0_11"/>
<dbReference type="OrthoDB" id="9781789at2"/>
<dbReference type="BioCyc" id="CORYNE:G18NG-9663-MONOMER"/>
<dbReference type="UniPathway" id="UPA00028">
    <property type="reaction ID" value="UER00003"/>
</dbReference>
<dbReference type="Proteomes" id="UP000000582">
    <property type="component" value="Chromosome"/>
</dbReference>
<dbReference type="Proteomes" id="UP000001009">
    <property type="component" value="Chromosome"/>
</dbReference>
<dbReference type="GO" id="GO:0005737">
    <property type="term" value="C:cytoplasm"/>
    <property type="evidence" value="ECO:0007669"/>
    <property type="project" value="UniProtKB-SubCell"/>
</dbReference>
<dbReference type="GO" id="GO:0003864">
    <property type="term" value="F:3-methyl-2-oxobutanoate hydroxymethyltransferase activity"/>
    <property type="evidence" value="ECO:0007669"/>
    <property type="project" value="UniProtKB-UniRule"/>
</dbReference>
<dbReference type="GO" id="GO:0000287">
    <property type="term" value="F:magnesium ion binding"/>
    <property type="evidence" value="ECO:0007669"/>
    <property type="project" value="TreeGrafter"/>
</dbReference>
<dbReference type="GO" id="GO:0015940">
    <property type="term" value="P:pantothenate biosynthetic process"/>
    <property type="evidence" value="ECO:0007669"/>
    <property type="project" value="UniProtKB-UniRule"/>
</dbReference>
<dbReference type="CDD" id="cd06557">
    <property type="entry name" value="KPHMT-like"/>
    <property type="match status" value="1"/>
</dbReference>
<dbReference type="FunFam" id="3.20.20.60:FF:000003">
    <property type="entry name" value="3-methyl-2-oxobutanoate hydroxymethyltransferase"/>
    <property type="match status" value="1"/>
</dbReference>
<dbReference type="Gene3D" id="3.20.20.60">
    <property type="entry name" value="Phosphoenolpyruvate-binding domains"/>
    <property type="match status" value="1"/>
</dbReference>
<dbReference type="HAMAP" id="MF_00156">
    <property type="entry name" value="PanB"/>
    <property type="match status" value="1"/>
</dbReference>
<dbReference type="InterPro" id="IPR003700">
    <property type="entry name" value="Pantoate_hydroxy_MeTrfase"/>
</dbReference>
<dbReference type="InterPro" id="IPR015813">
    <property type="entry name" value="Pyrv/PenolPyrv_kinase-like_dom"/>
</dbReference>
<dbReference type="InterPro" id="IPR040442">
    <property type="entry name" value="Pyrv_kinase-like_dom_sf"/>
</dbReference>
<dbReference type="NCBIfam" id="TIGR00222">
    <property type="entry name" value="panB"/>
    <property type="match status" value="1"/>
</dbReference>
<dbReference type="NCBIfam" id="NF001452">
    <property type="entry name" value="PRK00311.1"/>
    <property type="match status" value="1"/>
</dbReference>
<dbReference type="PANTHER" id="PTHR20881">
    <property type="entry name" value="3-METHYL-2-OXOBUTANOATE HYDROXYMETHYLTRANSFERASE"/>
    <property type="match status" value="1"/>
</dbReference>
<dbReference type="PANTHER" id="PTHR20881:SF0">
    <property type="entry name" value="3-METHYL-2-OXOBUTANOATE HYDROXYMETHYLTRANSFERASE"/>
    <property type="match status" value="1"/>
</dbReference>
<dbReference type="Pfam" id="PF02548">
    <property type="entry name" value="Pantoate_transf"/>
    <property type="match status" value="1"/>
</dbReference>
<dbReference type="PIRSF" id="PIRSF000388">
    <property type="entry name" value="Pantoate_hydroxy_MeTrfase"/>
    <property type="match status" value="1"/>
</dbReference>
<dbReference type="SUPFAM" id="SSF51621">
    <property type="entry name" value="Phosphoenolpyruvate/pyruvate domain"/>
    <property type="match status" value="1"/>
</dbReference>
<protein>
    <recommendedName>
        <fullName>3-methyl-2-oxobutanoate hydroxymethyltransferase</fullName>
        <ecNumber>2.1.2.11</ecNumber>
    </recommendedName>
    <alternativeName>
        <fullName>Ketopantoate hydroxymethyltransferase</fullName>
        <shortName>KPHMT</shortName>
    </alternativeName>
</protein>
<comment type="function">
    <text evidence="2">Catalyzes the reversible reaction in which hydroxymethyl group from 5,10-methylenetetrahydrofolate is transferred onto alpha-ketoisovalerate to form ketopantoate.</text>
</comment>
<comment type="catalytic activity">
    <reaction evidence="2">
        <text>3-methyl-2-oxobutanoate + (6R)-5,10-methylene-5,6,7,8-tetrahydrofolate + H2O = 2-dehydropantoate + (6S)-5,6,7,8-tetrahydrofolate</text>
        <dbReference type="Rhea" id="RHEA:11824"/>
        <dbReference type="ChEBI" id="CHEBI:11561"/>
        <dbReference type="ChEBI" id="CHEBI:11851"/>
        <dbReference type="ChEBI" id="CHEBI:15377"/>
        <dbReference type="ChEBI" id="CHEBI:15636"/>
        <dbReference type="ChEBI" id="CHEBI:57453"/>
        <dbReference type="EC" id="2.1.2.11"/>
    </reaction>
</comment>
<comment type="cofactor">
    <cofactor evidence="1">
        <name>Mg(2+)</name>
        <dbReference type="ChEBI" id="CHEBI:18420"/>
    </cofactor>
    <text evidence="1">Binds 1 Mg(2+) ion per subunit.</text>
</comment>
<comment type="pathway">
    <text>Cofactor biosynthesis; (R)-pantothenate biosynthesis; (R)-pantoate from 3-methyl-2-oxobutanoate: step 1/2.</text>
</comment>
<comment type="subunit">
    <text evidence="1">Homodecamer; pentamer of dimers.</text>
</comment>
<comment type="subcellular location">
    <subcellularLocation>
        <location evidence="3">Cytoplasm</location>
    </subcellularLocation>
</comment>
<comment type="similarity">
    <text evidence="3">Belongs to the PanB family.</text>
</comment>
<comment type="sequence caution" evidence="3">
    <conflict type="erroneous initiation">
        <sequence resource="EMBL-CDS" id="BAB97507"/>
    </conflict>
</comment>
<comment type="sequence caution" evidence="3">
    <conflict type="erroneous initiation">
        <sequence resource="EMBL-CDS" id="CAA65397"/>
    </conflict>
</comment>
<comment type="sequence caution" evidence="3">
    <conflict type="erroneous initiation">
        <sequence resource="EMBL-CDS" id="CAF18682"/>
    </conflict>
</comment>
<feature type="chain" id="PRO_0000184838" description="3-methyl-2-oxobutanoate hydroxymethyltransferase">
    <location>
        <begin position="1"/>
        <end position="269"/>
    </location>
</feature>
<feature type="active site" description="Proton acceptor" evidence="1">
    <location>
        <position position="187"/>
    </location>
</feature>
<feature type="binding site" evidence="1">
    <location>
        <begin position="50"/>
        <end position="51"/>
    </location>
    <ligand>
        <name>3-methyl-2-oxobutanoate</name>
        <dbReference type="ChEBI" id="CHEBI:11851"/>
    </ligand>
</feature>
<feature type="binding site" evidence="1">
    <location>
        <position position="50"/>
    </location>
    <ligand>
        <name>Mg(2+)</name>
        <dbReference type="ChEBI" id="CHEBI:18420"/>
    </ligand>
</feature>
<feature type="binding site" evidence="1">
    <location>
        <position position="89"/>
    </location>
    <ligand>
        <name>3-methyl-2-oxobutanoate</name>
        <dbReference type="ChEBI" id="CHEBI:11851"/>
    </ligand>
</feature>
<feature type="binding site" evidence="1">
    <location>
        <position position="89"/>
    </location>
    <ligand>
        <name>Mg(2+)</name>
        <dbReference type="ChEBI" id="CHEBI:18420"/>
    </ligand>
</feature>
<feature type="binding site" evidence="1">
    <location>
        <position position="119"/>
    </location>
    <ligand>
        <name>3-methyl-2-oxobutanoate</name>
        <dbReference type="ChEBI" id="CHEBI:11851"/>
    </ligand>
</feature>
<feature type="binding site" evidence="1">
    <location>
        <position position="121"/>
    </location>
    <ligand>
        <name>Mg(2+)</name>
        <dbReference type="ChEBI" id="CHEBI:18420"/>
    </ligand>
</feature>
<organism>
    <name type="scientific">Corynebacterium glutamicum (strain ATCC 13032 / DSM 20300 / JCM 1318 / BCRC 11384 / CCUG 27702 / LMG 3730 / NBRC 12168 / NCIMB 10025 / NRRL B-2784 / 534)</name>
    <dbReference type="NCBI Taxonomy" id="196627"/>
    <lineage>
        <taxon>Bacteria</taxon>
        <taxon>Bacillati</taxon>
        <taxon>Actinomycetota</taxon>
        <taxon>Actinomycetes</taxon>
        <taxon>Mycobacteriales</taxon>
        <taxon>Corynebacteriaceae</taxon>
        <taxon>Corynebacterium</taxon>
    </lineage>
</organism>
<accession>Q9X712</accession>
<keyword id="KW-0963">Cytoplasm</keyword>
<keyword id="KW-0460">Magnesium</keyword>
<keyword id="KW-0479">Metal-binding</keyword>
<keyword id="KW-0566">Pantothenate biosynthesis</keyword>
<keyword id="KW-1185">Reference proteome</keyword>
<keyword id="KW-0808">Transferase</keyword>
<proteinExistence type="evidence at protein level"/>